<comment type="function">
    <text evidence="2">Involved in base excision repair of DNA damaged by oxidation or by mutagenic agents. Acts as a DNA glycosylase that recognizes and removes damaged bases. Has a preference for oxidized purines, such as 7,8-dihydro-8-oxoguanine (8-oxoG). Has AP (apurinic/apyrimidinic) lyase activity and introduces nicks in the DNA strand. Cleaves the DNA backbone by beta-delta elimination to generate a single-strand break at the site of the removed base with both 3'- and 5'-phosphates.</text>
</comment>
<comment type="catalytic activity">
    <reaction evidence="2">
        <text>Hydrolysis of DNA containing ring-opened 7-methylguanine residues, releasing 2,6-diamino-4-hydroxy-5-(N-methyl)formamidopyrimidine.</text>
        <dbReference type="EC" id="3.2.2.23"/>
    </reaction>
</comment>
<comment type="catalytic activity">
    <reaction evidence="2">
        <text>2'-deoxyribonucleotide-(2'-deoxyribose 5'-phosphate)-2'-deoxyribonucleotide-DNA = a 3'-end 2'-deoxyribonucleotide-(2,3-dehydro-2,3-deoxyribose 5'-phosphate)-DNA + a 5'-end 5'-phospho-2'-deoxyribonucleoside-DNA + H(+)</text>
        <dbReference type="Rhea" id="RHEA:66592"/>
        <dbReference type="Rhea" id="RHEA-COMP:13180"/>
        <dbReference type="Rhea" id="RHEA-COMP:16897"/>
        <dbReference type="Rhea" id="RHEA-COMP:17067"/>
        <dbReference type="ChEBI" id="CHEBI:15378"/>
        <dbReference type="ChEBI" id="CHEBI:136412"/>
        <dbReference type="ChEBI" id="CHEBI:157695"/>
        <dbReference type="ChEBI" id="CHEBI:167181"/>
        <dbReference type="EC" id="4.2.99.18"/>
    </reaction>
</comment>
<comment type="cofactor">
    <cofactor evidence="2">
        <name>Zn(2+)</name>
        <dbReference type="ChEBI" id="CHEBI:29105"/>
    </cofactor>
    <text evidence="2">Binds 1 zinc ion per subunit.</text>
</comment>
<comment type="subunit">
    <text evidence="2">Monomer.</text>
</comment>
<comment type="similarity">
    <text evidence="2">Belongs to the FPG family.</text>
</comment>
<keyword id="KW-0227">DNA damage</keyword>
<keyword id="KW-0234">DNA repair</keyword>
<keyword id="KW-0238">DNA-binding</keyword>
<keyword id="KW-0326">Glycosidase</keyword>
<keyword id="KW-0378">Hydrolase</keyword>
<keyword id="KW-0456">Lyase</keyword>
<keyword id="KW-0479">Metal-binding</keyword>
<keyword id="KW-0511">Multifunctional enzyme</keyword>
<keyword id="KW-1185">Reference proteome</keyword>
<keyword id="KW-0862">Zinc</keyword>
<keyword id="KW-0863">Zinc-finger</keyword>
<gene>
    <name evidence="2" type="primary">mutM</name>
    <name evidence="2" type="synonym">fpg</name>
    <name type="ordered locus">trd_1895</name>
</gene>
<reference key="1">
    <citation type="journal article" date="2009" name="PLoS ONE">
        <title>Complete genome sequence of the aerobic CO-oxidizing thermophile Thermomicrobium roseum.</title>
        <authorList>
            <person name="Wu D."/>
            <person name="Raymond J."/>
            <person name="Wu M."/>
            <person name="Chatterji S."/>
            <person name="Ren Q."/>
            <person name="Graham J.E."/>
            <person name="Bryant D.A."/>
            <person name="Robb F."/>
            <person name="Colman A."/>
            <person name="Tallon L.J."/>
            <person name="Badger J.H."/>
            <person name="Madupu R."/>
            <person name="Ward N.L."/>
            <person name="Eisen J.A."/>
        </authorList>
    </citation>
    <scope>NUCLEOTIDE SEQUENCE [LARGE SCALE GENOMIC DNA]</scope>
    <source>
        <strain>ATCC 27502 / DSM 5159 / P-2</strain>
    </source>
</reference>
<sequence length="289" mass="32371">MPELPEVETIRRTLAPVLIGALVIGALRGEHPEDILLDPWPVFARRVRRHRIVALERRGKYLAARFEDGDRLVIHLGMTGELRLSHPATAPGKHCHLALVLRSLRPLPPSLVDQRQRFLLRYLDIRRFGRIALLDQAGWETFTARLGPEPLDPTLDPRALWSRLRERRTAIKAALLDQALLAGIGNIYADEALFQARLHPARRCQTLSLDEVERLLVALRTVLSAAIENAGTTIRDYRDGQGRAGSFQSRLQVYGKPAGTPCPRCGTGLARIRIAGRSSVFCPRCQPLH</sequence>
<evidence type="ECO:0000250" key="1"/>
<evidence type="ECO:0000255" key="2">
    <source>
        <dbReference type="HAMAP-Rule" id="MF_00103"/>
    </source>
</evidence>
<protein>
    <recommendedName>
        <fullName evidence="2">Formamidopyrimidine-DNA glycosylase</fullName>
        <shortName evidence="2">Fapy-DNA glycosylase</shortName>
        <ecNumber evidence="2">3.2.2.23</ecNumber>
    </recommendedName>
    <alternativeName>
        <fullName evidence="2">DNA-(apurinic or apyrimidinic site) lyase MutM</fullName>
        <shortName evidence="2">AP lyase MutM</shortName>
        <ecNumber evidence="2">4.2.99.18</ecNumber>
    </alternativeName>
</protein>
<dbReference type="EC" id="3.2.2.23" evidence="2"/>
<dbReference type="EC" id="4.2.99.18" evidence="2"/>
<dbReference type="EMBL" id="CP001275">
    <property type="protein sequence ID" value="ACM05457.1"/>
    <property type="molecule type" value="Genomic_DNA"/>
</dbReference>
<dbReference type="RefSeq" id="WP_015922837.1">
    <property type="nucleotide sequence ID" value="NC_011959.1"/>
</dbReference>
<dbReference type="SMR" id="B9L1Z5"/>
<dbReference type="STRING" id="309801.trd_1895"/>
<dbReference type="KEGG" id="tro:trd_1895"/>
<dbReference type="eggNOG" id="COG0266">
    <property type="taxonomic scope" value="Bacteria"/>
</dbReference>
<dbReference type="HOGENOM" id="CLU_038423_1_2_0"/>
<dbReference type="OrthoDB" id="9800855at2"/>
<dbReference type="Proteomes" id="UP000000447">
    <property type="component" value="Chromosome"/>
</dbReference>
<dbReference type="GO" id="GO:0034039">
    <property type="term" value="F:8-oxo-7,8-dihydroguanine DNA N-glycosylase activity"/>
    <property type="evidence" value="ECO:0007669"/>
    <property type="project" value="TreeGrafter"/>
</dbReference>
<dbReference type="GO" id="GO:0140078">
    <property type="term" value="F:class I DNA-(apurinic or apyrimidinic site) endonuclease activity"/>
    <property type="evidence" value="ECO:0007669"/>
    <property type="project" value="UniProtKB-EC"/>
</dbReference>
<dbReference type="GO" id="GO:0003684">
    <property type="term" value="F:damaged DNA binding"/>
    <property type="evidence" value="ECO:0007669"/>
    <property type="project" value="InterPro"/>
</dbReference>
<dbReference type="GO" id="GO:0008270">
    <property type="term" value="F:zinc ion binding"/>
    <property type="evidence" value="ECO:0007669"/>
    <property type="project" value="UniProtKB-UniRule"/>
</dbReference>
<dbReference type="GO" id="GO:0006284">
    <property type="term" value="P:base-excision repair"/>
    <property type="evidence" value="ECO:0007669"/>
    <property type="project" value="InterPro"/>
</dbReference>
<dbReference type="CDD" id="cd08966">
    <property type="entry name" value="EcFpg-like_N"/>
    <property type="match status" value="1"/>
</dbReference>
<dbReference type="FunFam" id="1.10.8.50:FF:000003">
    <property type="entry name" value="Formamidopyrimidine-DNA glycosylase"/>
    <property type="match status" value="1"/>
</dbReference>
<dbReference type="Gene3D" id="1.10.8.50">
    <property type="match status" value="1"/>
</dbReference>
<dbReference type="Gene3D" id="3.20.190.10">
    <property type="entry name" value="MutM-like, N-terminal"/>
    <property type="match status" value="1"/>
</dbReference>
<dbReference type="HAMAP" id="MF_00103">
    <property type="entry name" value="Fapy_DNA_glycosyl"/>
    <property type="match status" value="1"/>
</dbReference>
<dbReference type="InterPro" id="IPR015886">
    <property type="entry name" value="DNA_glyclase/AP_lyase_DNA-bd"/>
</dbReference>
<dbReference type="InterPro" id="IPR015887">
    <property type="entry name" value="DNA_glyclase_Znf_dom_DNA_BS"/>
</dbReference>
<dbReference type="InterPro" id="IPR020629">
    <property type="entry name" value="Formamido-pyr_DNA_Glyclase"/>
</dbReference>
<dbReference type="InterPro" id="IPR012319">
    <property type="entry name" value="FPG_cat"/>
</dbReference>
<dbReference type="InterPro" id="IPR035937">
    <property type="entry name" value="MutM-like_N-ter"/>
</dbReference>
<dbReference type="InterPro" id="IPR010979">
    <property type="entry name" value="Ribosomal_uS13-like_H2TH"/>
</dbReference>
<dbReference type="InterPro" id="IPR000214">
    <property type="entry name" value="Znf_DNA_glyclase/AP_lyase"/>
</dbReference>
<dbReference type="InterPro" id="IPR010663">
    <property type="entry name" value="Znf_FPG/IleRS"/>
</dbReference>
<dbReference type="NCBIfam" id="TIGR00577">
    <property type="entry name" value="fpg"/>
    <property type="match status" value="1"/>
</dbReference>
<dbReference type="NCBIfam" id="NF002211">
    <property type="entry name" value="PRK01103.1"/>
    <property type="match status" value="1"/>
</dbReference>
<dbReference type="PANTHER" id="PTHR22993">
    <property type="entry name" value="FORMAMIDOPYRIMIDINE-DNA GLYCOSYLASE"/>
    <property type="match status" value="1"/>
</dbReference>
<dbReference type="PANTHER" id="PTHR22993:SF9">
    <property type="entry name" value="FORMAMIDOPYRIMIDINE-DNA GLYCOSYLASE"/>
    <property type="match status" value="1"/>
</dbReference>
<dbReference type="Pfam" id="PF01149">
    <property type="entry name" value="Fapy_DNA_glyco"/>
    <property type="match status" value="1"/>
</dbReference>
<dbReference type="Pfam" id="PF06831">
    <property type="entry name" value="H2TH"/>
    <property type="match status" value="1"/>
</dbReference>
<dbReference type="Pfam" id="PF06827">
    <property type="entry name" value="zf-FPG_IleRS"/>
    <property type="match status" value="1"/>
</dbReference>
<dbReference type="SMART" id="SM00898">
    <property type="entry name" value="Fapy_DNA_glyco"/>
    <property type="match status" value="1"/>
</dbReference>
<dbReference type="SMART" id="SM01232">
    <property type="entry name" value="H2TH"/>
    <property type="match status" value="1"/>
</dbReference>
<dbReference type="SUPFAM" id="SSF57716">
    <property type="entry name" value="Glucocorticoid receptor-like (DNA-binding domain)"/>
    <property type="match status" value="1"/>
</dbReference>
<dbReference type="SUPFAM" id="SSF81624">
    <property type="entry name" value="N-terminal domain of MutM-like DNA repair proteins"/>
    <property type="match status" value="1"/>
</dbReference>
<dbReference type="SUPFAM" id="SSF46946">
    <property type="entry name" value="S13-like H2TH domain"/>
    <property type="match status" value="1"/>
</dbReference>
<dbReference type="PROSITE" id="PS51068">
    <property type="entry name" value="FPG_CAT"/>
    <property type="match status" value="1"/>
</dbReference>
<dbReference type="PROSITE" id="PS01242">
    <property type="entry name" value="ZF_FPG_1"/>
    <property type="match status" value="1"/>
</dbReference>
<dbReference type="PROSITE" id="PS51066">
    <property type="entry name" value="ZF_FPG_2"/>
    <property type="match status" value="1"/>
</dbReference>
<proteinExistence type="inferred from homology"/>
<feature type="initiator methionine" description="Removed" evidence="1">
    <location>
        <position position="1"/>
    </location>
</feature>
<feature type="chain" id="PRO_1000118903" description="Formamidopyrimidine-DNA glycosylase">
    <location>
        <begin position="2"/>
        <end position="289"/>
    </location>
</feature>
<feature type="zinc finger region" description="FPG-type" evidence="2">
    <location>
        <begin position="252"/>
        <end position="287"/>
    </location>
</feature>
<feature type="active site" description="Schiff-base intermediate with DNA" evidence="2">
    <location>
        <position position="2"/>
    </location>
</feature>
<feature type="active site" description="Proton donor" evidence="2">
    <location>
        <position position="3"/>
    </location>
</feature>
<feature type="active site" description="Proton donor; for beta-elimination activity" evidence="2">
    <location>
        <position position="60"/>
    </location>
</feature>
<feature type="active site" description="Proton donor; for delta-elimination activity" evidence="2">
    <location>
        <position position="277"/>
    </location>
</feature>
<feature type="binding site" evidence="2">
    <location>
        <position position="94"/>
    </location>
    <ligand>
        <name>DNA</name>
        <dbReference type="ChEBI" id="CHEBI:16991"/>
    </ligand>
</feature>
<feature type="binding site" evidence="2">
    <location>
        <position position="126"/>
    </location>
    <ligand>
        <name>DNA</name>
        <dbReference type="ChEBI" id="CHEBI:16991"/>
    </ligand>
</feature>
<feature type="binding site" evidence="2">
    <location>
        <position position="167"/>
    </location>
    <ligand>
        <name>DNA</name>
        <dbReference type="ChEBI" id="CHEBI:16991"/>
    </ligand>
</feature>
<organism>
    <name type="scientific">Thermomicrobium roseum (strain ATCC 27502 / DSM 5159 / P-2)</name>
    <dbReference type="NCBI Taxonomy" id="309801"/>
    <lineage>
        <taxon>Bacteria</taxon>
        <taxon>Pseudomonadati</taxon>
        <taxon>Thermomicrobiota</taxon>
        <taxon>Thermomicrobia</taxon>
        <taxon>Thermomicrobiales</taxon>
        <taxon>Thermomicrobiaceae</taxon>
        <taxon>Thermomicrobium</taxon>
    </lineage>
</organism>
<name>FPG_THERP</name>
<accession>B9L1Z5</accession>